<proteinExistence type="evidence at protein level"/>
<evidence type="ECO:0000255" key="1">
    <source>
        <dbReference type="PROSITE-ProRule" id="PRU01083"/>
    </source>
</evidence>
<evidence type="ECO:0000269" key="2">
    <source>
    </source>
</evidence>
<evidence type="ECO:0000269" key="3">
    <source>
    </source>
</evidence>
<evidence type="ECO:0000269" key="4">
    <source>
    </source>
</evidence>
<evidence type="ECO:0000269" key="5">
    <source>
    </source>
</evidence>
<evidence type="ECO:0000269" key="6">
    <source>
    </source>
</evidence>
<evidence type="ECO:0000305" key="7"/>
<evidence type="ECO:0007744" key="8">
    <source>
        <dbReference type="PDB" id="7BV5"/>
    </source>
</evidence>
<evidence type="ECO:0007829" key="9">
    <source>
        <dbReference type="PDB" id="7BV5"/>
    </source>
</evidence>
<name>TAD2_YEAST</name>
<protein>
    <recommendedName>
        <fullName>tRNA-specific adenosine deaminase subunit TAD2</fullName>
        <ecNumber>3.5.4.33</ecNumber>
    </recommendedName>
    <alternativeName>
        <fullName>tRNA-specific adenosine-34 deaminase subunit TAD2</fullName>
    </alternativeName>
</protein>
<gene>
    <name type="primary">TAD2</name>
    <name type="ordered locus">YJL035C</name>
    <name type="ORF">J1246</name>
</gene>
<organism>
    <name type="scientific">Saccharomyces cerevisiae (strain ATCC 204508 / S288c)</name>
    <name type="common">Baker's yeast</name>
    <dbReference type="NCBI Taxonomy" id="559292"/>
    <lineage>
        <taxon>Eukaryota</taxon>
        <taxon>Fungi</taxon>
        <taxon>Dikarya</taxon>
        <taxon>Ascomycota</taxon>
        <taxon>Saccharomycotina</taxon>
        <taxon>Saccharomycetes</taxon>
        <taxon>Saccharomycetales</taxon>
        <taxon>Saccharomycetaceae</taxon>
        <taxon>Saccharomyces</taxon>
    </lineage>
</organism>
<keyword id="KW-0002">3D-structure</keyword>
<keyword id="KW-0963">Cytoplasm</keyword>
<keyword id="KW-0378">Hydrolase</keyword>
<keyword id="KW-0479">Metal-binding</keyword>
<keyword id="KW-0539">Nucleus</keyword>
<keyword id="KW-1185">Reference proteome</keyword>
<keyword id="KW-0819">tRNA processing</keyword>
<keyword id="KW-0862">Zinc</keyword>
<feature type="chain" id="PRO_0000171740" description="tRNA-specific adenosine deaminase subunit TAD2">
    <location>
        <begin position="1"/>
        <end position="250"/>
    </location>
</feature>
<feature type="domain" description="CMP/dCMP-type deaminase" evidence="1">
    <location>
        <begin position="1"/>
        <end position="119"/>
    </location>
</feature>
<feature type="active site" description="Proton donor" evidence="1">
    <location>
        <position position="56"/>
    </location>
</feature>
<feature type="binding site" evidence="5 8">
    <location>
        <position position="54"/>
    </location>
    <ligand>
        <name>Zn(2+)</name>
        <dbReference type="ChEBI" id="CHEBI:29105"/>
        <note>catalytic</note>
    </ligand>
</feature>
<feature type="binding site" evidence="5 8">
    <location>
        <position position="88"/>
    </location>
    <ligand>
        <name>Zn(2+)</name>
        <dbReference type="ChEBI" id="CHEBI:29105"/>
        <note>catalytic</note>
    </ligand>
</feature>
<feature type="binding site" evidence="5 8">
    <location>
        <position position="91"/>
    </location>
    <ligand>
        <name>Zn(2+)</name>
        <dbReference type="ChEBI" id="CHEBI:29105"/>
        <note>catalytic</note>
    </ligand>
</feature>
<feature type="helix" evidence="9">
    <location>
        <begin position="2"/>
        <end position="19"/>
    </location>
</feature>
<feature type="strand" evidence="9">
    <location>
        <begin position="26"/>
        <end position="31"/>
    </location>
</feature>
<feature type="turn" evidence="9">
    <location>
        <begin position="32"/>
        <end position="34"/>
    </location>
</feature>
<feature type="strand" evidence="9">
    <location>
        <begin position="37"/>
        <end position="42"/>
    </location>
</feature>
<feature type="helix" evidence="9">
    <location>
        <begin position="45"/>
        <end position="48"/>
    </location>
</feature>
<feature type="helix" evidence="9">
    <location>
        <begin position="55"/>
        <end position="75"/>
    </location>
</feature>
<feature type="helix" evidence="9">
    <location>
        <begin position="76"/>
        <end position="78"/>
    </location>
</feature>
<feature type="strand" evidence="9">
    <location>
        <begin position="79"/>
        <end position="85"/>
    </location>
</feature>
<feature type="helix" evidence="9">
    <location>
        <begin position="89"/>
        <end position="97"/>
    </location>
</feature>
<feature type="strand" evidence="9">
    <location>
        <begin position="101"/>
        <end position="107"/>
    </location>
</feature>
<feature type="turn" evidence="9">
    <location>
        <begin position="110"/>
        <end position="112"/>
    </location>
</feature>
<feature type="helix" evidence="9">
    <location>
        <begin position="121"/>
        <end position="123"/>
    </location>
</feature>
<feature type="strand" evidence="9">
    <location>
        <begin position="125"/>
        <end position="127"/>
    </location>
</feature>
<feature type="turn" evidence="9">
    <location>
        <begin position="130"/>
        <end position="133"/>
    </location>
</feature>
<feature type="strand" evidence="9">
    <location>
        <begin position="139"/>
        <end position="141"/>
    </location>
</feature>
<feature type="helix" evidence="9">
    <location>
        <begin position="146"/>
        <end position="160"/>
    </location>
</feature>
<feature type="helix" evidence="9">
    <location>
        <begin position="185"/>
        <end position="187"/>
    </location>
</feature>
<feature type="helix" evidence="9">
    <location>
        <begin position="191"/>
        <end position="197"/>
    </location>
</feature>
<feature type="helix" evidence="9">
    <location>
        <begin position="200"/>
        <end position="209"/>
    </location>
</feature>
<feature type="helix" evidence="9">
    <location>
        <begin position="219"/>
        <end position="223"/>
    </location>
</feature>
<feature type="helix" evidence="9">
    <location>
        <begin position="229"/>
        <end position="242"/>
    </location>
</feature>
<accession>P47058</accession>
<accession>D6VWE8</accession>
<sequence>MQHIKHMRTAVRLARYALDHDETPVACIFVHTPTGQVMAYGMNDTNKSLTGVAHAEFMGIDQIKAMLGSRGVVDVFKDITLYVTVEPCIMCASALKQLDIGKVVFGCGNERFGGNGTVLSVNHDTCTLVPKNNSAAGYESIPGILRKEAIMLLRYFYVRQNERAPKPRSKSDRVLDKNTFPPMEWSKYLNEEAFIETFGDDYRTCFANKVDLSSNSVDWDLIDSHQDNIIQELEEQCKMFKFNVHKKSKV</sequence>
<comment type="function">
    <text evidence="2 6">Structural subunit of tRNA-specific adenosine deaminase, which deaminates adenosine-34 (the first, also called wobble position of the anticodon) to inosine in many tRNAs. Inosine-34 allows the decoding of 3 different nucleotides at the third position of mRNA codons, as inosine is able to pair with U, C, and A.</text>
</comment>
<comment type="catalytic activity">
    <reaction evidence="2 6">
        <text>adenosine(34) in tRNA + H2O + H(+) = inosine(34) in tRNA + NH4(+)</text>
        <dbReference type="Rhea" id="RHEA:43168"/>
        <dbReference type="Rhea" id="RHEA-COMP:10373"/>
        <dbReference type="Rhea" id="RHEA-COMP:10374"/>
        <dbReference type="ChEBI" id="CHEBI:15377"/>
        <dbReference type="ChEBI" id="CHEBI:15378"/>
        <dbReference type="ChEBI" id="CHEBI:28938"/>
        <dbReference type="ChEBI" id="CHEBI:74411"/>
        <dbReference type="ChEBI" id="CHEBI:82852"/>
        <dbReference type="EC" id="3.5.4.33"/>
    </reaction>
</comment>
<comment type="cofactor">
    <cofactor evidence="5">
        <name>Zn(2+)</name>
        <dbReference type="ChEBI" id="CHEBI:29105"/>
    </cofactor>
</comment>
<comment type="biophysicochemical properties">
    <kinetics>
        <KM evidence="6">2.3 nM for tRNA(Ser)(anticodon AGA)</KM>
    </kinetics>
</comment>
<comment type="subunit">
    <text evidence="2 5">Heterodimer with TAD3.</text>
</comment>
<comment type="interaction">
    <interactant intactId="EBI-18939">
        <id>P47058</id>
    </interactant>
    <interactant intactId="EBI-2094330">
        <id>Q9URQ3</id>
        <label>TAD3</label>
    </interactant>
    <organismsDiffer>false</organismsDiffer>
    <experiments>3</experiments>
</comment>
<comment type="subcellular location">
    <subcellularLocation>
        <location evidence="3">Cytoplasm</location>
    </subcellularLocation>
    <subcellularLocation>
        <location evidence="3">Nucleus</location>
    </subcellularLocation>
</comment>
<comment type="miscellaneous">
    <text evidence="4">Present with 830 molecules/cell in log phase SD medium.</text>
</comment>
<comment type="similarity">
    <text evidence="7">Belongs to the cytidine and deoxycytidylate deaminase family. ADAT2 subfamily.</text>
</comment>
<comment type="sequence caution" evidence="7">
    <conflict type="erroneous initiation">
        <sequence resource="EMBL-CDS" id="CAA88261"/>
    </conflict>
</comment>
<reference key="1">
    <citation type="journal article" date="1999" name="Science">
        <title>An adenosine deaminase that generates inosine at the wobble position of transfer RNAs.</title>
        <authorList>
            <person name="Gerber A.P."/>
            <person name="Keller W."/>
        </authorList>
    </citation>
    <scope>NUCLEOTIDE SEQUENCE [GENOMIC DNA]</scope>
    <scope>FUNCTION</scope>
    <scope>CATALYTIC ACTIVITY</scope>
    <source>
        <strain>BMA41</strain>
    </source>
</reference>
<reference key="2">
    <citation type="journal article" date="1996" name="EMBO J.">
        <title>Complete nucleotide sequence of Saccharomyces cerevisiae chromosome X.</title>
        <authorList>
            <person name="Galibert F."/>
            <person name="Alexandraki D."/>
            <person name="Baur A."/>
            <person name="Boles E."/>
            <person name="Chalwatzis N."/>
            <person name="Chuat J.-C."/>
            <person name="Coster F."/>
            <person name="Cziepluch C."/>
            <person name="de Haan M."/>
            <person name="Domdey H."/>
            <person name="Durand P."/>
            <person name="Entian K.-D."/>
            <person name="Gatius M."/>
            <person name="Goffeau A."/>
            <person name="Grivell L.A."/>
            <person name="Hennemann A."/>
            <person name="Herbert C.J."/>
            <person name="Heumann K."/>
            <person name="Hilger F."/>
            <person name="Hollenberg C.P."/>
            <person name="Huang M.-E."/>
            <person name="Jacq C."/>
            <person name="Jauniaux J.-C."/>
            <person name="Katsoulou C."/>
            <person name="Kirchrath L."/>
            <person name="Kleine K."/>
            <person name="Kordes E."/>
            <person name="Koetter P."/>
            <person name="Liebl S."/>
            <person name="Louis E.J."/>
            <person name="Manus V."/>
            <person name="Mewes H.-W."/>
            <person name="Miosga T."/>
            <person name="Obermaier B."/>
            <person name="Perea J."/>
            <person name="Pohl T.M."/>
            <person name="Portetelle D."/>
            <person name="Pujol A."/>
            <person name="Purnelle B."/>
            <person name="Ramezani Rad M."/>
            <person name="Rasmussen S.W."/>
            <person name="Rose M."/>
            <person name="Rossau R."/>
            <person name="Schaaff-Gerstenschlaeger I."/>
            <person name="Smits P.H.M."/>
            <person name="Scarcez T."/>
            <person name="Soriano N."/>
            <person name="To Van D."/>
            <person name="Tzermia M."/>
            <person name="Van Broekhoven A."/>
            <person name="Vandenbol M."/>
            <person name="Wedler H."/>
            <person name="von Wettstein D."/>
            <person name="Wambutt R."/>
            <person name="Zagulski M."/>
            <person name="Zollner A."/>
            <person name="Karpfinger-Hartl L."/>
        </authorList>
    </citation>
    <scope>NUCLEOTIDE SEQUENCE [LARGE SCALE GENOMIC DNA]</scope>
    <source>
        <strain>ATCC 204508 / S288c</strain>
    </source>
</reference>
<reference key="3">
    <citation type="journal article" date="2014" name="G3 (Bethesda)">
        <title>The reference genome sequence of Saccharomyces cerevisiae: Then and now.</title>
        <authorList>
            <person name="Engel S.R."/>
            <person name="Dietrich F.S."/>
            <person name="Fisk D.G."/>
            <person name="Binkley G."/>
            <person name="Balakrishnan R."/>
            <person name="Costanzo M.C."/>
            <person name="Dwight S.S."/>
            <person name="Hitz B.C."/>
            <person name="Karra K."/>
            <person name="Nash R.S."/>
            <person name="Weng S."/>
            <person name="Wong E.D."/>
            <person name="Lloyd P."/>
            <person name="Skrzypek M.S."/>
            <person name="Miyasato S.R."/>
            <person name="Simison M."/>
            <person name="Cherry J.M."/>
        </authorList>
    </citation>
    <scope>GENOME REANNOTATION</scope>
    <source>
        <strain>ATCC 204508 / S288c</strain>
    </source>
</reference>
<reference key="4">
    <citation type="journal article" date="2007" name="Genome Res.">
        <title>Approaching a complete repository of sequence-verified protein-encoding clones for Saccharomyces cerevisiae.</title>
        <authorList>
            <person name="Hu Y."/>
            <person name="Rolfs A."/>
            <person name="Bhullar B."/>
            <person name="Murthy T.V.S."/>
            <person name="Zhu C."/>
            <person name="Berger M.F."/>
            <person name="Camargo A.A."/>
            <person name="Kelley F."/>
            <person name="McCarron S."/>
            <person name="Jepson D."/>
            <person name="Richardson A."/>
            <person name="Raphael J."/>
            <person name="Moreira D."/>
            <person name="Taycher E."/>
            <person name="Zuo D."/>
            <person name="Mohr S."/>
            <person name="Kane M.F."/>
            <person name="Williamson J."/>
            <person name="Simpson A.J.G."/>
            <person name="Bulyk M.L."/>
            <person name="Harlow E."/>
            <person name="Marsischky G."/>
            <person name="Kolodner R.D."/>
            <person name="LaBaer J."/>
        </authorList>
    </citation>
    <scope>NUCLEOTIDE SEQUENCE [GENOMIC DNA]</scope>
    <source>
        <strain>ATCC 204508 / S288c</strain>
    </source>
</reference>
<reference key="5">
    <citation type="submission" date="1995-02" db="EMBL/GenBank/DDBJ databases">
        <authorList>
            <person name="Sora S."/>
            <person name="Tiboni O."/>
            <person name="Sanangelantoni A.M."/>
        </authorList>
    </citation>
    <scope>NUCLEOTIDE SEQUENCE [GENOMIC DNA] OF 12-250</scope>
</reference>
<reference key="6">
    <citation type="journal article" date="1996" name="J. Mol. Biol.">
        <title>Mechanism, specificity and general properties of the yeast enzyme catalysing the formation of inosine 34 in the anticodon of transfer RNA.</title>
        <authorList>
            <person name="Auxilien S."/>
            <person name="Crain P.F."/>
            <person name="Trewyn R.W."/>
            <person name="Grosjean H."/>
        </authorList>
    </citation>
    <scope>FUNCTION</scope>
    <scope>CATALYTIC ACTIVITY</scope>
    <scope>BIOPHYSICOCHEMICAL PROPERTIES</scope>
</reference>
<reference key="7">
    <citation type="journal article" date="2003" name="Nature">
        <title>Global analysis of protein localization in budding yeast.</title>
        <authorList>
            <person name="Huh W.-K."/>
            <person name="Falvo J.V."/>
            <person name="Gerke L.C."/>
            <person name="Carroll A.S."/>
            <person name="Howson R.W."/>
            <person name="Weissman J.S."/>
            <person name="O'Shea E.K."/>
        </authorList>
    </citation>
    <scope>SUBCELLULAR LOCATION [LARGE SCALE ANALYSIS]</scope>
</reference>
<reference key="8">
    <citation type="journal article" date="2003" name="Nature">
        <title>Global analysis of protein expression in yeast.</title>
        <authorList>
            <person name="Ghaemmaghami S."/>
            <person name="Huh W.-K."/>
            <person name="Bower K."/>
            <person name="Howson R.W."/>
            <person name="Belle A."/>
            <person name="Dephoure N."/>
            <person name="O'Shea E.K."/>
            <person name="Weissman J.S."/>
        </authorList>
    </citation>
    <scope>LEVEL OF PROTEIN EXPRESSION [LARGE SCALE ANALYSIS]</scope>
</reference>
<reference evidence="8" key="9">
    <citation type="journal article" date="2020" name="BMC Biol.">
        <title>Crystal structure of the yeast heterodimeric ADAT2/3 deaminase.</title>
        <authorList>
            <person name="Liu X."/>
            <person name="Chen R."/>
            <person name="Sun Y."/>
            <person name="Chen R."/>
            <person name="Zhou J."/>
            <person name="Tian Q."/>
            <person name="Tao X."/>
            <person name="Zhang Z."/>
            <person name="Luo G.Z."/>
            <person name="Xie W."/>
        </authorList>
    </citation>
    <scope>X-RAY CRYSTALLOGRAPHY (2.80 ANGSTROMS) OF 2-250 IN COMPLEX WITH ZN(2+)</scope>
</reference>
<dbReference type="EC" id="3.5.4.33"/>
<dbReference type="EMBL" id="AJ242667">
    <property type="protein sequence ID" value="CAB60629.1"/>
    <property type="molecule type" value="Genomic_DNA"/>
</dbReference>
<dbReference type="EMBL" id="Z49310">
    <property type="protein sequence ID" value="CAA89326.1"/>
    <property type="molecule type" value="Genomic_DNA"/>
</dbReference>
<dbReference type="EMBL" id="AY693172">
    <property type="protein sequence ID" value="AAT93191.1"/>
    <property type="molecule type" value="Genomic_DNA"/>
</dbReference>
<dbReference type="EMBL" id="Z48229">
    <property type="protein sequence ID" value="CAA88261.1"/>
    <property type="status" value="ALT_INIT"/>
    <property type="molecule type" value="Genomic_DNA"/>
</dbReference>
<dbReference type="EMBL" id="BK006943">
    <property type="protein sequence ID" value="DAA08764.1"/>
    <property type="molecule type" value="Genomic_DNA"/>
</dbReference>
<dbReference type="PIR" id="S56807">
    <property type="entry name" value="S56807"/>
</dbReference>
<dbReference type="RefSeq" id="NP_012499.1">
    <property type="nucleotide sequence ID" value="NM_001181469.1"/>
</dbReference>
<dbReference type="PDB" id="7BV5">
    <property type="method" value="X-ray"/>
    <property type="resolution" value="2.80 A"/>
    <property type="chains" value="A/B=2-250"/>
</dbReference>
<dbReference type="PDBsum" id="7BV5"/>
<dbReference type="SMR" id="P47058"/>
<dbReference type="BioGRID" id="33725">
    <property type="interactions" value="91"/>
</dbReference>
<dbReference type="ComplexPortal" id="CPX-1742">
    <property type="entry name" value="tRNA-specific adenosine-34 deaminase complex"/>
</dbReference>
<dbReference type="DIP" id="DIP-5546N"/>
<dbReference type="FunCoup" id="P47058">
    <property type="interactions" value="617"/>
</dbReference>
<dbReference type="IntAct" id="P47058">
    <property type="interactions" value="1"/>
</dbReference>
<dbReference type="MINT" id="P47058"/>
<dbReference type="STRING" id="4932.YJL035C"/>
<dbReference type="PaxDb" id="4932-YJL035C"/>
<dbReference type="PeptideAtlas" id="P47058"/>
<dbReference type="EnsemblFungi" id="YJL035C_mRNA">
    <property type="protein sequence ID" value="YJL035C"/>
    <property type="gene ID" value="YJL035C"/>
</dbReference>
<dbReference type="GeneID" id="853417"/>
<dbReference type="KEGG" id="sce:YJL035C"/>
<dbReference type="AGR" id="SGD:S000003572"/>
<dbReference type="SGD" id="S000003572">
    <property type="gene designation" value="TAD2"/>
</dbReference>
<dbReference type="VEuPathDB" id="FungiDB:YJL035C"/>
<dbReference type="eggNOG" id="KOG1018">
    <property type="taxonomic scope" value="Eukaryota"/>
</dbReference>
<dbReference type="GeneTree" id="ENSGT00940000164335"/>
<dbReference type="HOGENOM" id="CLU_025810_8_1_1"/>
<dbReference type="InParanoid" id="P47058"/>
<dbReference type="OMA" id="PCQMCAG"/>
<dbReference type="OrthoDB" id="1701769at2759"/>
<dbReference type="BioCyc" id="YEAST:YJL035C-MONOMER"/>
<dbReference type="BRENDA" id="3.5.4.33">
    <property type="organism ID" value="984"/>
</dbReference>
<dbReference type="BioGRID-ORCS" id="853417">
    <property type="hits" value="3 hits in 10 CRISPR screens"/>
</dbReference>
<dbReference type="PRO" id="PR:P47058"/>
<dbReference type="Proteomes" id="UP000002311">
    <property type="component" value="Chromosome X"/>
</dbReference>
<dbReference type="RNAct" id="P47058">
    <property type="molecule type" value="protein"/>
</dbReference>
<dbReference type="GO" id="GO:0005737">
    <property type="term" value="C:cytoplasm"/>
    <property type="evidence" value="ECO:0007005"/>
    <property type="project" value="SGD"/>
</dbReference>
<dbReference type="GO" id="GO:0005634">
    <property type="term" value="C:nucleus"/>
    <property type="evidence" value="ECO:0007005"/>
    <property type="project" value="SGD"/>
</dbReference>
<dbReference type="GO" id="GO:0052718">
    <property type="term" value="C:tRNA-specific adenosine-34 deaminase complex"/>
    <property type="evidence" value="ECO:0000353"/>
    <property type="project" value="ComplexPortal"/>
</dbReference>
<dbReference type="GO" id="GO:0008251">
    <property type="term" value="F:tRNA-specific adenosine deaminase activity"/>
    <property type="evidence" value="ECO:0000314"/>
    <property type="project" value="SGD"/>
</dbReference>
<dbReference type="GO" id="GO:0052717">
    <property type="term" value="F:tRNA-specific adenosine-34 deaminase activity"/>
    <property type="evidence" value="ECO:0000318"/>
    <property type="project" value="GO_Central"/>
</dbReference>
<dbReference type="GO" id="GO:0008270">
    <property type="term" value="F:zinc ion binding"/>
    <property type="evidence" value="ECO:0007669"/>
    <property type="project" value="InterPro"/>
</dbReference>
<dbReference type="GO" id="GO:0006400">
    <property type="term" value="P:tRNA modification"/>
    <property type="evidence" value="ECO:0000314"/>
    <property type="project" value="SGD"/>
</dbReference>
<dbReference type="GO" id="GO:0002100">
    <property type="term" value="P:tRNA wobble adenosine to inosine editing"/>
    <property type="evidence" value="ECO:0000314"/>
    <property type="project" value="ComplexPortal"/>
</dbReference>
<dbReference type="CDD" id="cd01285">
    <property type="entry name" value="nucleoside_deaminase"/>
    <property type="match status" value="1"/>
</dbReference>
<dbReference type="FunFam" id="3.40.140.10:FF:000039">
    <property type="entry name" value="tRNA-specific adenosine deaminase"/>
    <property type="match status" value="1"/>
</dbReference>
<dbReference type="Gene3D" id="3.40.140.10">
    <property type="entry name" value="Cytidine Deaminase, domain 2"/>
    <property type="match status" value="1"/>
</dbReference>
<dbReference type="InterPro" id="IPR016192">
    <property type="entry name" value="APOBEC/CMP_deaminase_Zn-bd"/>
</dbReference>
<dbReference type="InterPro" id="IPR002125">
    <property type="entry name" value="CMP_dCMP_dom"/>
</dbReference>
<dbReference type="InterPro" id="IPR016193">
    <property type="entry name" value="Cytidine_deaminase-like"/>
</dbReference>
<dbReference type="PANTHER" id="PTHR11079">
    <property type="entry name" value="CYTOSINE DEAMINASE FAMILY MEMBER"/>
    <property type="match status" value="1"/>
</dbReference>
<dbReference type="PANTHER" id="PTHR11079:SF149">
    <property type="entry name" value="TRNA-SPECIFIC ADENOSINE DEAMINASE 2"/>
    <property type="match status" value="1"/>
</dbReference>
<dbReference type="Pfam" id="PF00383">
    <property type="entry name" value="dCMP_cyt_deam_1"/>
    <property type="match status" value="1"/>
</dbReference>
<dbReference type="SUPFAM" id="SSF53927">
    <property type="entry name" value="Cytidine deaminase-like"/>
    <property type="match status" value="1"/>
</dbReference>
<dbReference type="PROSITE" id="PS00903">
    <property type="entry name" value="CYT_DCMP_DEAMINASES_1"/>
    <property type="match status" value="1"/>
</dbReference>
<dbReference type="PROSITE" id="PS51747">
    <property type="entry name" value="CYT_DCMP_DEAMINASES_2"/>
    <property type="match status" value="1"/>
</dbReference>